<keyword id="KW-0963">Cytoplasm</keyword>
<keyword id="KW-0560">Oxidoreductase</keyword>
<reference key="1">
    <citation type="submission" date="2009-07" db="EMBL/GenBank/DDBJ databases">
        <title>Complete sequence of Pectobacterium carotovorum subsp. carotovorum PC1.</title>
        <authorList>
            <consortium name="US DOE Joint Genome Institute"/>
            <person name="Lucas S."/>
            <person name="Copeland A."/>
            <person name="Lapidus A."/>
            <person name="Glavina del Rio T."/>
            <person name="Tice H."/>
            <person name="Bruce D."/>
            <person name="Goodwin L."/>
            <person name="Pitluck S."/>
            <person name="Munk A.C."/>
            <person name="Brettin T."/>
            <person name="Detter J.C."/>
            <person name="Han C."/>
            <person name="Tapia R."/>
            <person name="Larimer F."/>
            <person name="Land M."/>
            <person name="Hauser L."/>
            <person name="Kyrpides N."/>
            <person name="Mikhailova N."/>
            <person name="Balakrishnan V."/>
            <person name="Glasner J."/>
            <person name="Perna N.T."/>
        </authorList>
    </citation>
    <scope>NUCLEOTIDE SEQUENCE [LARGE SCALE GENOMIC DNA]</scope>
    <source>
        <strain>PC1</strain>
    </source>
</reference>
<sequence length="244" mass="27738">MAEFNLEALNALPKAEQAAALAVVNGQLEQLSAQERVSWALENLPGDYVLSSSFGIQAAVSLHLVTQQRPDIPVILTDTGYLFPETYQFIDALTEQLKLNLQVYRATESAAWQEARYGKLWEQGVEGIERYNLLNKVEPMNRALSELKAKTWFAGLRREQSGSRGDLPVLAIQRGVFKFLPIIDWDNRTVYQYLKENGLSYHPLWDQGYLSVGDTHTTRKWEPGMSEEETRFFGLKRECGLHEG</sequence>
<gene>
    <name evidence="1" type="primary">cysH</name>
    <name type="ordered locus">PC1_3363</name>
</gene>
<proteinExistence type="inferred from homology"/>
<accession>C6DDH2</accession>
<dbReference type="EC" id="1.8.4.8" evidence="1"/>
<dbReference type="EMBL" id="CP001657">
    <property type="protein sequence ID" value="ACT14379.1"/>
    <property type="molecule type" value="Genomic_DNA"/>
</dbReference>
<dbReference type="RefSeq" id="WP_015841509.1">
    <property type="nucleotide sequence ID" value="NC_012917.1"/>
</dbReference>
<dbReference type="SMR" id="C6DDH2"/>
<dbReference type="STRING" id="561230.PC1_3363"/>
<dbReference type="KEGG" id="pct:PC1_3363"/>
<dbReference type="eggNOG" id="COG0175">
    <property type="taxonomic scope" value="Bacteria"/>
</dbReference>
<dbReference type="HOGENOM" id="CLU_044089_3_0_6"/>
<dbReference type="OrthoDB" id="9794018at2"/>
<dbReference type="UniPathway" id="UPA00140">
    <property type="reaction ID" value="UER00206"/>
</dbReference>
<dbReference type="Proteomes" id="UP000002736">
    <property type="component" value="Chromosome"/>
</dbReference>
<dbReference type="GO" id="GO:0005737">
    <property type="term" value="C:cytoplasm"/>
    <property type="evidence" value="ECO:0007669"/>
    <property type="project" value="UniProtKB-SubCell"/>
</dbReference>
<dbReference type="GO" id="GO:0004604">
    <property type="term" value="F:phosphoadenylyl-sulfate reductase (thioredoxin) activity"/>
    <property type="evidence" value="ECO:0007669"/>
    <property type="project" value="UniProtKB-UniRule"/>
</dbReference>
<dbReference type="GO" id="GO:0070814">
    <property type="term" value="P:hydrogen sulfide biosynthetic process"/>
    <property type="evidence" value="ECO:0007669"/>
    <property type="project" value="UniProtKB-UniRule"/>
</dbReference>
<dbReference type="GO" id="GO:0019379">
    <property type="term" value="P:sulfate assimilation, phosphoadenylyl sulfate reduction by phosphoadenylyl-sulfate reductase (thioredoxin)"/>
    <property type="evidence" value="ECO:0007669"/>
    <property type="project" value="UniProtKB-UniRule"/>
</dbReference>
<dbReference type="CDD" id="cd23945">
    <property type="entry name" value="PAPS_reductase"/>
    <property type="match status" value="1"/>
</dbReference>
<dbReference type="FunFam" id="3.40.50.620:FF:000043">
    <property type="entry name" value="Phosphoadenosine phosphosulfate reductase"/>
    <property type="match status" value="1"/>
</dbReference>
<dbReference type="Gene3D" id="3.40.50.620">
    <property type="entry name" value="HUPs"/>
    <property type="match status" value="1"/>
</dbReference>
<dbReference type="HAMAP" id="MF_00063">
    <property type="entry name" value="CysH"/>
    <property type="match status" value="1"/>
</dbReference>
<dbReference type="InterPro" id="IPR004511">
    <property type="entry name" value="PAPS/APS_Rdtase"/>
</dbReference>
<dbReference type="InterPro" id="IPR002500">
    <property type="entry name" value="PAPS_reduct_dom"/>
</dbReference>
<dbReference type="InterPro" id="IPR011800">
    <property type="entry name" value="PAPS_reductase_CysH"/>
</dbReference>
<dbReference type="InterPro" id="IPR014729">
    <property type="entry name" value="Rossmann-like_a/b/a_fold"/>
</dbReference>
<dbReference type="NCBIfam" id="TIGR00434">
    <property type="entry name" value="cysH"/>
    <property type="match status" value="1"/>
</dbReference>
<dbReference type="NCBIfam" id="TIGR02057">
    <property type="entry name" value="PAPS_reductase"/>
    <property type="match status" value="1"/>
</dbReference>
<dbReference type="NCBIfam" id="NF002537">
    <property type="entry name" value="PRK02090.1"/>
    <property type="match status" value="1"/>
</dbReference>
<dbReference type="PANTHER" id="PTHR46509">
    <property type="entry name" value="PHOSPHOADENOSINE PHOSPHOSULFATE REDUCTASE"/>
    <property type="match status" value="1"/>
</dbReference>
<dbReference type="PANTHER" id="PTHR46509:SF1">
    <property type="entry name" value="PHOSPHOADENOSINE PHOSPHOSULFATE REDUCTASE"/>
    <property type="match status" value="1"/>
</dbReference>
<dbReference type="Pfam" id="PF01507">
    <property type="entry name" value="PAPS_reduct"/>
    <property type="match status" value="1"/>
</dbReference>
<dbReference type="PIRSF" id="PIRSF000857">
    <property type="entry name" value="PAPS_reductase"/>
    <property type="match status" value="1"/>
</dbReference>
<dbReference type="SUPFAM" id="SSF52402">
    <property type="entry name" value="Adenine nucleotide alpha hydrolases-like"/>
    <property type="match status" value="1"/>
</dbReference>
<name>CYSH_PECCP</name>
<feature type="chain" id="PRO_1000202397" description="Phosphoadenosine 5'-phosphosulfate reductase">
    <location>
        <begin position="1"/>
        <end position="244"/>
    </location>
</feature>
<feature type="active site" description="Nucleophile; cysteine thiosulfonate intermediate" evidence="1">
    <location>
        <position position="239"/>
    </location>
</feature>
<evidence type="ECO:0000255" key="1">
    <source>
        <dbReference type="HAMAP-Rule" id="MF_00063"/>
    </source>
</evidence>
<protein>
    <recommendedName>
        <fullName evidence="1">Phosphoadenosine 5'-phosphosulfate reductase</fullName>
        <shortName evidence="1">PAPS reductase</shortName>
        <ecNumber evidence="1">1.8.4.8</ecNumber>
    </recommendedName>
    <alternativeName>
        <fullName evidence="1">3'-phosphoadenylylsulfate reductase</fullName>
    </alternativeName>
    <alternativeName>
        <fullName evidence="1">PAPS reductase, thioredoxin dependent</fullName>
    </alternativeName>
    <alternativeName>
        <fullName evidence="1">PAPS sulfotransferase</fullName>
    </alternativeName>
    <alternativeName>
        <fullName evidence="1">PAdoPS reductase</fullName>
    </alternativeName>
</protein>
<comment type="function">
    <text evidence="1">Catalyzes the formation of sulfite from phosphoadenosine 5'-phosphosulfate (PAPS) using thioredoxin as an electron donor.</text>
</comment>
<comment type="catalytic activity">
    <reaction evidence="1">
        <text>[thioredoxin]-disulfide + sulfite + adenosine 3',5'-bisphosphate + 2 H(+) = [thioredoxin]-dithiol + 3'-phosphoadenylyl sulfate</text>
        <dbReference type="Rhea" id="RHEA:11724"/>
        <dbReference type="Rhea" id="RHEA-COMP:10698"/>
        <dbReference type="Rhea" id="RHEA-COMP:10700"/>
        <dbReference type="ChEBI" id="CHEBI:15378"/>
        <dbReference type="ChEBI" id="CHEBI:17359"/>
        <dbReference type="ChEBI" id="CHEBI:29950"/>
        <dbReference type="ChEBI" id="CHEBI:50058"/>
        <dbReference type="ChEBI" id="CHEBI:58339"/>
        <dbReference type="ChEBI" id="CHEBI:58343"/>
        <dbReference type="EC" id="1.8.4.8"/>
    </reaction>
</comment>
<comment type="pathway">
    <text evidence="1">Sulfur metabolism; hydrogen sulfide biosynthesis; sulfite from sulfate: step 3/3.</text>
</comment>
<comment type="subcellular location">
    <subcellularLocation>
        <location evidence="1">Cytoplasm</location>
    </subcellularLocation>
</comment>
<comment type="similarity">
    <text evidence="1">Belongs to the PAPS reductase family. CysH subfamily.</text>
</comment>
<organism>
    <name type="scientific">Pectobacterium carotovorum subsp. carotovorum (strain PC1)</name>
    <dbReference type="NCBI Taxonomy" id="561230"/>
    <lineage>
        <taxon>Bacteria</taxon>
        <taxon>Pseudomonadati</taxon>
        <taxon>Pseudomonadota</taxon>
        <taxon>Gammaproteobacteria</taxon>
        <taxon>Enterobacterales</taxon>
        <taxon>Pectobacteriaceae</taxon>
        <taxon>Pectobacterium</taxon>
    </lineage>
</organism>